<keyword id="KW-0378">Hydrolase</keyword>
<keyword id="KW-0511">Multifunctional enzyme</keyword>
<keyword id="KW-0658">Purine biosynthesis</keyword>
<keyword id="KW-0808">Transferase</keyword>
<feature type="chain" id="PRO_1000076487" description="Bifunctional purine biosynthesis protein PurH">
    <location>
        <begin position="1"/>
        <end position="508"/>
    </location>
</feature>
<feature type="domain" description="MGS-like" evidence="2">
    <location>
        <begin position="1"/>
        <end position="145"/>
    </location>
</feature>
<comment type="catalytic activity">
    <reaction evidence="1">
        <text>(6R)-10-formyltetrahydrofolate + 5-amino-1-(5-phospho-beta-D-ribosyl)imidazole-4-carboxamide = 5-formamido-1-(5-phospho-D-ribosyl)imidazole-4-carboxamide + (6S)-5,6,7,8-tetrahydrofolate</text>
        <dbReference type="Rhea" id="RHEA:22192"/>
        <dbReference type="ChEBI" id="CHEBI:57453"/>
        <dbReference type="ChEBI" id="CHEBI:58467"/>
        <dbReference type="ChEBI" id="CHEBI:58475"/>
        <dbReference type="ChEBI" id="CHEBI:195366"/>
        <dbReference type="EC" id="2.1.2.3"/>
    </reaction>
</comment>
<comment type="catalytic activity">
    <reaction evidence="1">
        <text>IMP + H2O = 5-formamido-1-(5-phospho-D-ribosyl)imidazole-4-carboxamide</text>
        <dbReference type="Rhea" id="RHEA:18445"/>
        <dbReference type="ChEBI" id="CHEBI:15377"/>
        <dbReference type="ChEBI" id="CHEBI:58053"/>
        <dbReference type="ChEBI" id="CHEBI:58467"/>
        <dbReference type="EC" id="3.5.4.10"/>
    </reaction>
</comment>
<comment type="pathway">
    <text evidence="1">Purine metabolism; IMP biosynthesis via de novo pathway; 5-formamido-1-(5-phospho-D-ribosyl)imidazole-4-carboxamide from 5-amino-1-(5-phospho-D-ribosyl)imidazole-4-carboxamide (10-formyl THF route): step 1/1.</text>
</comment>
<comment type="pathway">
    <text evidence="1">Purine metabolism; IMP biosynthesis via de novo pathway; IMP from 5-formamido-1-(5-phospho-D-ribosyl)imidazole-4-carboxamide: step 1/1.</text>
</comment>
<comment type="domain">
    <text evidence="1">The IMP cyclohydrolase activity resides in the N-terminal region.</text>
</comment>
<comment type="similarity">
    <text evidence="1">Belongs to the PurH family.</text>
</comment>
<reference key="1">
    <citation type="submission" date="2007-11" db="EMBL/GenBank/DDBJ databases">
        <title>Complete sequence of Petroga mobilis SJ95.</title>
        <authorList>
            <consortium name="US DOE Joint Genome Institute"/>
            <person name="Copeland A."/>
            <person name="Lucas S."/>
            <person name="Lapidus A."/>
            <person name="Barry K."/>
            <person name="Glavina del Rio T."/>
            <person name="Dalin E."/>
            <person name="Tice H."/>
            <person name="Pitluck S."/>
            <person name="Meincke L."/>
            <person name="Brettin T."/>
            <person name="Bruce D."/>
            <person name="Detter J.C."/>
            <person name="Han C."/>
            <person name="Kuske C.R."/>
            <person name="Schmutz J."/>
            <person name="Larimer F."/>
            <person name="Land M."/>
            <person name="Hauser L."/>
            <person name="Kyrpides N."/>
            <person name="Mikhailova N."/>
            <person name="Noll K."/>
            <person name="Richardson P."/>
        </authorList>
    </citation>
    <scope>NUCLEOTIDE SEQUENCE [LARGE SCALE GENOMIC DNA]</scope>
    <source>
        <strain>DSM 10674 / SJ95</strain>
    </source>
</reference>
<accession>A9BIX9</accession>
<organism>
    <name type="scientific">Petrotoga mobilis (strain DSM 10674 / SJ95)</name>
    <dbReference type="NCBI Taxonomy" id="403833"/>
    <lineage>
        <taxon>Bacteria</taxon>
        <taxon>Thermotogati</taxon>
        <taxon>Thermotogota</taxon>
        <taxon>Thermotogae</taxon>
        <taxon>Petrotogales</taxon>
        <taxon>Petrotogaceae</taxon>
        <taxon>Petrotoga</taxon>
    </lineage>
</organism>
<gene>
    <name evidence="1" type="primary">purH</name>
    <name type="ordered locus">Pmob_1777</name>
</gene>
<evidence type="ECO:0000255" key="1">
    <source>
        <dbReference type="HAMAP-Rule" id="MF_00139"/>
    </source>
</evidence>
<evidence type="ECO:0000255" key="2">
    <source>
        <dbReference type="PROSITE-ProRule" id="PRU01202"/>
    </source>
</evidence>
<dbReference type="EC" id="2.1.2.3" evidence="1"/>
<dbReference type="EC" id="3.5.4.10" evidence="1"/>
<dbReference type="EMBL" id="CP000879">
    <property type="protein sequence ID" value="ABX32467.1"/>
    <property type="molecule type" value="Genomic_DNA"/>
</dbReference>
<dbReference type="RefSeq" id="WP_012209564.1">
    <property type="nucleotide sequence ID" value="NC_010003.1"/>
</dbReference>
<dbReference type="SMR" id="A9BIX9"/>
<dbReference type="STRING" id="403833.Pmob_1777"/>
<dbReference type="KEGG" id="pmo:Pmob_1777"/>
<dbReference type="eggNOG" id="COG0138">
    <property type="taxonomic scope" value="Bacteria"/>
</dbReference>
<dbReference type="HOGENOM" id="CLU_016316_5_2_0"/>
<dbReference type="OrthoDB" id="9802065at2"/>
<dbReference type="UniPathway" id="UPA00074">
    <property type="reaction ID" value="UER00133"/>
</dbReference>
<dbReference type="UniPathway" id="UPA00074">
    <property type="reaction ID" value="UER00135"/>
</dbReference>
<dbReference type="Proteomes" id="UP000000789">
    <property type="component" value="Chromosome"/>
</dbReference>
<dbReference type="GO" id="GO:0005829">
    <property type="term" value="C:cytosol"/>
    <property type="evidence" value="ECO:0007669"/>
    <property type="project" value="TreeGrafter"/>
</dbReference>
<dbReference type="GO" id="GO:0003937">
    <property type="term" value="F:IMP cyclohydrolase activity"/>
    <property type="evidence" value="ECO:0007669"/>
    <property type="project" value="UniProtKB-UniRule"/>
</dbReference>
<dbReference type="GO" id="GO:0004643">
    <property type="term" value="F:phosphoribosylaminoimidazolecarboxamide formyltransferase activity"/>
    <property type="evidence" value="ECO:0007669"/>
    <property type="project" value="UniProtKB-UniRule"/>
</dbReference>
<dbReference type="GO" id="GO:0006189">
    <property type="term" value="P:'de novo' IMP biosynthetic process"/>
    <property type="evidence" value="ECO:0007669"/>
    <property type="project" value="UniProtKB-UniRule"/>
</dbReference>
<dbReference type="CDD" id="cd01421">
    <property type="entry name" value="IMPCH"/>
    <property type="match status" value="1"/>
</dbReference>
<dbReference type="FunFam" id="3.40.140.20:FF:000001">
    <property type="entry name" value="Bifunctional purine biosynthesis protein PurH"/>
    <property type="match status" value="1"/>
</dbReference>
<dbReference type="FunFam" id="3.40.140.20:FF:000002">
    <property type="entry name" value="Bifunctional purine biosynthesis protein PurH"/>
    <property type="match status" value="1"/>
</dbReference>
<dbReference type="FunFam" id="3.40.50.1380:FF:000001">
    <property type="entry name" value="Bifunctional purine biosynthesis protein PurH"/>
    <property type="match status" value="1"/>
</dbReference>
<dbReference type="Gene3D" id="3.40.140.20">
    <property type="match status" value="2"/>
</dbReference>
<dbReference type="Gene3D" id="3.40.50.1380">
    <property type="entry name" value="Methylglyoxal synthase-like domain"/>
    <property type="match status" value="1"/>
</dbReference>
<dbReference type="HAMAP" id="MF_00139">
    <property type="entry name" value="PurH"/>
    <property type="match status" value="1"/>
</dbReference>
<dbReference type="InterPro" id="IPR024051">
    <property type="entry name" value="AICAR_Tfase_dup_dom_sf"/>
</dbReference>
<dbReference type="InterPro" id="IPR016193">
    <property type="entry name" value="Cytidine_deaminase-like"/>
</dbReference>
<dbReference type="InterPro" id="IPR011607">
    <property type="entry name" value="MGS-like_dom"/>
</dbReference>
<dbReference type="InterPro" id="IPR036914">
    <property type="entry name" value="MGS-like_dom_sf"/>
</dbReference>
<dbReference type="InterPro" id="IPR002695">
    <property type="entry name" value="PurH-like"/>
</dbReference>
<dbReference type="NCBIfam" id="NF002049">
    <property type="entry name" value="PRK00881.1"/>
    <property type="match status" value="1"/>
</dbReference>
<dbReference type="NCBIfam" id="TIGR00355">
    <property type="entry name" value="purH"/>
    <property type="match status" value="1"/>
</dbReference>
<dbReference type="PANTHER" id="PTHR11692:SF0">
    <property type="entry name" value="BIFUNCTIONAL PURINE BIOSYNTHESIS PROTEIN ATIC"/>
    <property type="match status" value="1"/>
</dbReference>
<dbReference type="PANTHER" id="PTHR11692">
    <property type="entry name" value="BIFUNCTIONAL PURINE BIOSYNTHESIS PROTEIN PURH"/>
    <property type="match status" value="1"/>
</dbReference>
<dbReference type="Pfam" id="PF01808">
    <property type="entry name" value="AICARFT_IMPCHas"/>
    <property type="match status" value="1"/>
</dbReference>
<dbReference type="Pfam" id="PF02142">
    <property type="entry name" value="MGS"/>
    <property type="match status" value="1"/>
</dbReference>
<dbReference type="PIRSF" id="PIRSF000414">
    <property type="entry name" value="AICARFT_IMPCHas"/>
    <property type="match status" value="1"/>
</dbReference>
<dbReference type="SMART" id="SM00798">
    <property type="entry name" value="AICARFT_IMPCHas"/>
    <property type="match status" value="1"/>
</dbReference>
<dbReference type="SMART" id="SM00851">
    <property type="entry name" value="MGS"/>
    <property type="match status" value="1"/>
</dbReference>
<dbReference type="SUPFAM" id="SSF53927">
    <property type="entry name" value="Cytidine deaminase-like"/>
    <property type="match status" value="1"/>
</dbReference>
<dbReference type="SUPFAM" id="SSF52335">
    <property type="entry name" value="Methylglyoxal synthase-like"/>
    <property type="match status" value="1"/>
</dbReference>
<dbReference type="PROSITE" id="PS51855">
    <property type="entry name" value="MGS"/>
    <property type="match status" value="1"/>
</dbReference>
<protein>
    <recommendedName>
        <fullName evidence="1">Bifunctional purine biosynthesis protein PurH</fullName>
    </recommendedName>
    <domain>
        <recommendedName>
            <fullName evidence="1">Phosphoribosylaminoimidazolecarboxamide formyltransferase</fullName>
            <ecNumber evidence="1">2.1.2.3</ecNumber>
        </recommendedName>
        <alternativeName>
            <fullName evidence="1">AICAR transformylase</fullName>
        </alternativeName>
    </domain>
    <domain>
        <recommendedName>
            <fullName evidence="1">IMP cyclohydrolase</fullName>
            <ecNumber evidence="1">3.5.4.10</ecNumber>
        </recommendedName>
        <alternativeName>
            <fullName evidence="1">ATIC</fullName>
        </alternativeName>
        <alternativeName>
            <fullName evidence="1">IMP synthase</fullName>
        </alternativeName>
        <alternativeName>
            <fullName evidence="1">Inosinicase</fullName>
        </alternativeName>
    </domain>
</protein>
<name>PUR9_PETMO</name>
<proteinExistence type="inferred from homology"/>
<sequence>MIKRALLSTYKKEKVVDFAQTLQELGIEIISTGGTAKKLQENSIEVTPVEEITNFPEILNGRVKTLNPFIQGGILARRENKQDMETLENLKIEPIDLIYVNLYPFVEVANKRDVDMNELIEFIDIGGPTMIRSAAKNYKDVIVVVDESDLEQISAKLKTPEELDENYRLYLASKAFNLTAFYDSCISNYLNAQLTNKDDFQEFLTVPFEKSYEMRYGENPHQSAIFYKNTLTSGAMTSFEQLNGKELSFNNLRDADSAWKAVNEFEDTACCCLKHSSPCGIALGDSVIEAYQKAYSCDPVSIFGGIVAFNRKIDVETALELKKIFLEIIMAPEYDEEALDILKEKKNLRILKMNSKPIDTYEYVSVDGGILVQEVDKRVINEFEVVTETKVSEEIKEELLFAWKAVKHVKSNAIVVSKNKATTGIGAGQPNRIWAATQALERSKDKGGDVLASDAFFPFSDVVEKAAEYGIKAIIQPGGSIRDDESIQACSKYGIAMVFTGMRHFKHI</sequence>